<evidence type="ECO:0000255" key="1"/>
<evidence type="ECO:0000305" key="2"/>
<comment type="function">
    <text>Receptor for the peptide pheromone M-factor, a mating factor of S.pombe. Pheromone signaling is essential for initiation of meiosis in S.pombe; M-factor signaling alone may be sufficient.</text>
</comment>
<comment type="subcellular location">
    <subcellularLocation>
        <location>Membrane</location>
        <topology>Multi-pass membrane protein</topology>
    </subcellularLocation>
</comment>
<comment type="induction">
    <text>By at least 3 types of regulation: the mating-type of the cell, nutritional conditions and pheromone signaling.</text>
</comment>
<comment type="similarity">
    <text evidence="2">Belongs to the G-protein coupled receptor 4 family.</text>
</comment>
<organism>
    <name type="scientific">Schizosaccharomyces pombe (strain 972 / ATCC 24843)</name>
    <name type="common">Fission yeast</name>
    <dbReference type="NCBI Taxonomy" id="284812"/>
    <lineage>
        <taxon>Eukaryota</taxon>
        <taxon>Fungi</taxon>
        <taxon>Dikarya</taxon>
        <taxon>Ascomycota</taxon>
        <taxon>Taphrinomycotina</taxon>
        <taxon>Schizosaccharomycetes</taxon>
        <taxon>Schizosaccharomycetales</taxon>
        <taxon>Schizosaccharomycetaceae</taxon>
        <taxon>Schizosaccharomyces</taxon>
    </lineage>
</organism>
<accession>P31397</accession>
<keyword id="KW-0297">G-protein coupled receptor</keyword>
<keyword id="KW-0472">Membrane</keyword>
<keyword id="KW-0589">Pheromone response</keyword>
<keyword id="KW-0675">Receptor</keyword>
<keyword id="KW-1185">Reference proteome</keyword>
<keyword id="KW-0807">Transducer</keyword>
<keyword id="KW-0812">Transmembrane</keyword>
<keyword id="KW-1133">Transmembrane helix</keyword>
<sequence>MLPIGIFYQFYAYFALVLSIPILYMQLRARNIPCLLLLFWLTLTTLIYVVESAIWSNPYAETIRWMGYGLCDITSRIVTCSSIGIPASAFTLVLYLDTVIRRDHPLKRYENWIWHVCLSILLPLIIMAMMVPLESNRYVVICMNGCYSSFYQTWYTLLFFYIPPCLLSFGGLFFVSRIVVLYWRRQRELQQFFQRDSQLTSKRFLRLLCLAAVFFLGYFPLTIFMVVANGKLQQFLPFNHELVEAWHQESITYYPTTKVGLNDWVPPTVLYLMSLFFSTSGGWTEKVALILWSLLVWLPFTKNTALGRHAQFKLDCCKSIESTMAGKTLDSTDFKEKCLVLERQWSKSSIPSDNSSELQDAAKYV</sequence>
<name>MAP3_SCHPO</name>
<reference key="1">
    <citation type="journal article" date="1993" name="Mol. Cell. Biol.">
        <title>Schizosaccharomyces pombe map3+ encodes the putative M-factor receptor.</title>
        <authorList>
            <person name="Tanaka K."/>
            <person name="Davey J."/>
            <person name="Imai Y."/>
            <person name="Yamamoto M."/>
        </authorList>
    </citation>
    <scope>NUCLEOTIDE SEQUENCE [GENOMIC DNA]</scope>
    <source>
        <strain>ST711</strain>
    </source>
</reference>
<reference key="2">
    <citation type="journal article" date="2002" name="Nature">
        <title>The genome sequence of Schizosaccharomyces pombe.</title>
        <authorList>
            <person name="Wood V."/>
            <person name="Gwilliam R."/>
            <person name="Rajandream M.A."/>
            <person name="Lyne M.H."/>
            <person name="Lyne R."/>
            <person name="Stewart A."/>
            <person name="Sgouros J.G."/>
            <person name="Peat N."/>
            <person name="Hayles J."/>
            <person name="Baker S.G."/>
            <person name="Basham D."/>
            <person name="Bowman S."/>
            <person name="Brooks K."/>
            <person name="Brown D."/>
            <person name="Brown S."/>
            <person name="Chillingworth T."/>
            <person name="Churcher C.M."/>
            <person name="Collins M."/>
            <person name="Connor R."/>
            <person name="Cronin A."/>
            <person name="Davis P."/>
            <person name="Feltwell T."/>
            <person name="Fraser A."/>
            <person name="Gentles S."/>
            <person name="Goble A."/>
            <person name="Hamlin N."/>
            <person name="Harris D.E."/>
            <person name="Hidalgo J."/>
            <person name="Hodgson G."/>
            <person name="Holroyd S."/>
            <person name="Hornsby T."/>
            <person name="Howarth S."/>
            <person name="Huckle E.J."/>
            <person name="Hunt S."/>
            <person name="Jagels K."/>
            <person name="James K.D."/>
            <person name="Jones L."/>
            <person name="Jones M."/>
            <person name="Leather S."/>
            <person name="McDonald S."/>
            <person name="McLean J."/>
            <person name="Mooney P."/>
            <person name="Moule S."/>
            <person name="Mungall K.L."/>
            <person name="Murphy L.D."/>
            <person name="Niblett D."/>
            <person name="Odell C."/>
            <person name="Oliver K."/>
            <person name="O'Neil S."/>
            <person name="Pearson D."/>
            <person name="Quail M.A."/>
            <person name="Rabbinowitsch E."/>
            <person name="Rutherford K.M."/>
            <person name="Rutter S."/>
            <person name="Saunders D."/>
            <person name="Seeger K."/>
            <person name="Sharp S."/>
            <person name="Skelton J."/>
            <person name="Simmonds M.N."/>
            <person name="Squares R."/>
            <person name="Squares S."/>
            <person name="Stevens K."/>
            <person name="Taylor K."/>
            <person name="Taylor R.G."/>
            <person name="Tivey A."/>
            <person name="Walsh S.V."/>
            <person name="Warren T."/>
            <person name="Whitehead S."/>
            <person name="Woodward J.R."/>
            <person name="Volckaert G."/>
            <person name="Aert R."/>
            <person name="Robben J."/>
            <person name="Grymonprez B."/>
            <person name="Weltjens I."/>
            <person name="Vanstreels E."/>
            <person name="Rieger M."/>
            <person name="Schaefer M."/>
            <person name="Mueller-Auer S."/>
            <person name="Gabel C."/>
            <person name="Fuchs M."/>
            <person name="Duesterhoeft A."/>
            <person name="Fritzc C."/>
            <person name="Holzer E."/>
            <person name="Moestl D."/>
            <person name="Hilbert H."/>
            <person name="Borzym K."/>
            <person name="Langer I."/>
            <person name="Beck A."/>
            <person name="Lehrach H."/>
            <person name="Reinhardt R."/>
            <person name="Pohl T.M."/>
            <person name="Eger P."/>
            <person name="Zimmermann W."/>
            <person name="Wedler H."/>
            <person name="Wambutt R."/>
            <person name="Purnelle B."/>
            <person name="Goffeau A."/>
            <person name="Cadieu E."/>
            <person name="Dreano S."/>
            <person name="Gloux S."/>
            <person name="Lelaure V."/>
            <person name="Mottier S."/>
            <person name="Galibert F."/>
            <person name="Aves S.J."/>
            <person name="Xiang Z."/>
            <person name="Hunt C."/>
            <person name="Moore K."/>
            <person name="Hurst S.M."/>
            <person name="Lucas M."/>
            <person name="Rochet M."/>
            <person name="Gaillardin C."/>
            <person name="Tallada V.A."/>
            <person name="Garzon A."/>
            <person name="Thode G."/>
            <person name="Daga R.R."/>
            <person name="Cruzado L."/>
            <person name="Jimenez J."/>
            <person name="Sanchez M."/>
            <person name="del Rey F."/>
            <person name="Benito J."/>
            <person name="Dominguez A."/>
            <person name="Revuelta J.L."/>
            <person name="Moreno S."/>
            <person name="Armstrong J."/>
            <person name="Forsburg S.L."/>
            <person name="Cerutti L."/>
            <person name="Lowe T."/>
            <person name="McCombie W.R."/>
            <person name="Paulsen I."/>
            <person name="Potashkin J."/>
            <person name="Shpakovski G.V."/>
            <person name="Ussery D."/>
            <person name="Barrell B.G."/>
            <person name="Nurse P."/>
        </authorList>
    </citation>
    <scope>NUCLEOTIDE SEQUENCE [LARGE SCALE GENOMIC DNA]</scope>
    <source>
        <strain>972 / ATCC 24843</strain>
    </source>
</reference>
<dbReference type="EMBL" id="D10933">
    <property type="protein sequence ID" value="BAA01727.1"/>
    <property type="molecule type" value="Genomic_DNA"/>
</dbReference>
<dbReference type="EMBL" id="CU329670">
    <property type="protein sequence ID" value="CAA93308.1"/>
    <property type="molecule type" value="Genomic_DNA"/>
</dbReference>
<dbReference type="PIR" id="A48105">
    <property type="entry name" value="A48105"/>
</dbReference>
<dbReference type="RefSeq" id="NP_593942.1">
    <property type="nucleotide sequence ID" value="NM_001019370.2"/>
</dbReference>
<dbReference type="SMR" id="P31397"/>
<dbReference type="BioGRID" id="278740">
    <property type="interactions" value="8"/>
</dbReference>
<dbReference type="FunCoup" id="P31397">
    <property type="interactions" value="126"/>
</dbReference>
<dbReference type="STRING" id="284812.P31397"/>
<dbReference type="iPTMnet" id="P31397"/>
<dbReference type="PaxDb" id="4896-SPAC3F10.10c.1"/>
<dbReference type="EnsemblFungi" id="SPAC3F10.10c.1">
    <property type="protein sequence ID" value="SPAC3F10.10c.1:pep"/>
    <property type="gene ID" value="SPAC3F10.10c"/>
</dbReference>
<dbReference type="PomBase" id="SPAC3F10.10c">
    <property type="gene designation" value="map3"/>
</dbReference>
<dbReference type="VEuPathDB" id="FungiDB:SPAC3F10.10c"/>
<dbReference type="eggNOG" id="ENOG502S44N">
    <property type="taxonomic scope" value="Eukaryota"/>
</dbReference>
<dbReference type="HOGENOM" id="CLU_763245_0_0_1"/>
<dbReference type="InParanoid" id="P31397"/>
<dbReference type="OMA" id="VICMNGC"/>
<dbReference type="PhylomeDB" id="P31397"/>
<dbReference type="PRO" id="PR:P31397"/>
<dbReference type="Proteomes" id="UP000002485">
    <property type="component" value="Chromosome I"/>
</dbReference>
<dbReference type="GO" id="GO:0005634">
    <property type="term" value="C:nucleus"/>
    <property type="evidence" value="ECO:0007005"/>
    <property type="project" value="PomBase"/>
</dbReference>
<dbReference type="GO" id="GO:0005886">
    <property type="term" value="C:plasma membrane"/>
    <property type="evidence" value="ECO:0000318"/>
    <property type="project" value="GO_Central"/>
</dbReference>
<dbReference type="GO" id="GO:0031520">
    <property type="term" value="C:plasma membrane of cell tip"/>
    <property type="evidence" value="ECO:0000314"/>
    <property type="project" value="PomBase"/>
</dbReference>
<dbReference type="GO" id="GO:0004932">
    <property type="term" value="F:mating-type factor pheromone receptor activity"/>
    <property type="evidence" value="ECO:0000269"/>
    <property type="project" value="PomBase"/>
</dbReference>
<dbReference type="GO" id="GO:0071507">
    <property type="term" value="P:pheromone response MAPK cascade"/>
    <property type="evidence" value="ECO:0000315"/>
    <property type="project" value="PomBase"/>
</dbReference>
<dbReference type="GO" id="GO:0000750">
    <property type="term" value="P:pheromone-dependent signal transduction involved in conjugation with cellular fusion"/>
    <property type="evidence" value="ECO:0000318"/>
    <property type="project" value="GO_Central"/>
</dbReference>
<dbReference type="GO" id="GO:0051446">
    <property type="term" value="P:positive regulation of meiotic cell cycle"/>
    <property type="evidence" value="ECO:0000305"/>
    <property type="project" value="PomBase"/>
</dbReference>
<dbReference type="CDD" id="cd14966">
    <property type="entry name" value="7tmD_STE3"/>
    <property type="match status" value="1"/>
</dbReference>
<dbReference type="InterPro" id="IPR001499">
    <property type="entry name" value="GPCR_STE3"/>
</dbReference>
<dbReference type="PANTHER" id="PTHR28097">
    <property type="entry name" value="PHEROMONE A FACTOR RECEPTOR"/>
    <property type="match status" value="1"/>
</dbReference>
<dbReference type="PANTHER" id="PTHR28097:SF1">
    <property type="entry name" value="PHEROMONE A FACTOR RECEPTOR"/>
    <property type="match status" value="1"/>
</dbReference>
<dbReference type="Pfam" id="PF02076">
    <property type="entry name" value="STE3"/>
    <property type="match status" value="1"/>
</dbReference>
<dbReference type="PRINTS" id="PR00899">
    <property type="entry name" value="GPCRSTE3"/>
</dbReference>
<gene>
    <name type="primary">map3</name>
    <name type="ORF">SPAC3F10.10c</name>
</gene>
<feature type="chain" id="PRO_0000195075" description="Pheromone M-factor receptor">
    <location>
        <begin position="1"/>
        <end position="365"/>
    </location>
</feature>
<feature type="transmembrane region" description="Helical; Name=1" evidence="1">
    <location>
        <begin position="7"/>
        <end position="24"/>
    </location>
</feature>
<feature type="transmembrane region" description="Helical; Name=2" evidence="1">
    <location>
        <begin position="31"/>
        <end position="54"/>
    </location>
</feature>
<feature type="transmembrane region" description="Helical; Name=3" evidence="1">
    <location>
        <begin position="73"/>
        <end position="100"/>
    </location>
</feature>
<feature type="transmembrane region" description="Helical; Name=4" evidence="1">
    <location>
        <begin position="116"/>
        <end position="133"/>
    </location>
</feature>
<feature type="transmembrane region" description="Helical; Name=5" evidence="1">
    <location>
        <begin position="155"/>
        <end position="182"/>
    </location>
</feature>
<feature type="transmembrane region" description="Helical; Name=6" evidence="1">
    <location>
        <begin position="204"/>
        <end position="226"/>
    </location>
</feature>
<feature type="transmembrane region" description="Helical; Name=7" evidence="1">
    <location>
        <begin position="265"/>
        <end position="283"/>
    </location>
</feature>
<proteinExistence type="evidence at transcript level"/>
<protein>
    <recommendedName>
        <fullName>Pheromone M-factor receptor</fullName>
    </recommendedName>
</protein>